<gene>
    <name evidence="1" type="primary">pgi</name>
    <name type="ordered locus">Fphi_0158</name>
</gene>
<keyword id="KW-0963">Cytoplasm</keyword>
<keyword id="KW-0312">Gluconeogenesis</keyword>
<keyword id="KW-0324">Glycolysis</keyword>
<keyword id="KW-0413">Isomerase</keyword>
<name>G6PI_FRAP2</name>
<protein>
    <recommendedName>
        <fullName evidence="1">Glucose-6-phosphate isomerase</fullName>
        <shortName evidence="1">GPI</shortName>
        <ecNumber evidence="1">5.3.1.9</ecNumber>
    </recommendedName>
    <alternativeName>
        <fullName evidence="1">Phosphoglucose isomerase</fullName>
        <shortName evidence="1">PGI</shortName>
    </alternativeName>
    <alternativeName>
        <fullName evidence="1">Phosphohexose isomerase</fullName>
        <shortName evidence="1">PHI</shortName>
    </alternativeName>
</protein>
<comment type="function">
    <text evidence="1">Catalyzes the reversible isomerization of glucose-6-phosphate to fructose-6-phosphate.</text>
</comment>
<comment type="catalytic activity">
    <reaction evidence="1">
        <text>alpha-D-glucose 6-phosphate = beta-D-fructose 6-phosphate</text>
        <dbReference type="Rhea" id="RHEA:11816"/>
        <dbReference type="ChEBI" id="CHEBI:57634"/>
        <dbReference type="ChEBI" id="CHEBI:58225"/>
        <dbReference type="EC" id="5.3.1.9"/>
    </reaction>
</comment>
<comment type="pathway">
    <text evidence="1">Carbohydrate biosynthesis; gluconeogenesis.</text>
</comment>
<comment type="pathway">
    <text evidence="1">Carbohydrate degradation; glycolysis; D-glyceraldehyde 3-phosphate and glycerone phosphate from D-glucose: step 2/4.</text>
</comment>
<comment type="subcellular location">
    <subcellularLocation>
        <location evidence="1">Cytoplasm</location>
    </subcellularLocation>
</comment>
<comment type="similarity">
    <text evidence="1">Belongs to the GPI family.</text>
</comment>
<proteinExistence type="inferred from homology"/>
<reference key="1">
    <citation type="submission" date="2007-12" db="EMBL/GenBank/DDBJ databases">
        <title>Complete sequence of chromosome of Francisella philomiragia subsp. philomiragia ATCC 25017.</title>
        <authorList>
            <consortium name="US DOE Joint Genome Institute"/>
            <person name="Copeland A."/>
            <person name="Lucas S."/>
            <person name="Lapidus A."/>
            <person name="Barry K."/>
            <person name="Detter J.C."/>
            <person name="Glavina del Rio T."/>
            <person name="Hammon N."/>
            <person name="Israni S."/>
            <person name="Dalin E."/>
            <person name="Tice H."/>
            <person name="Pitluck S."/>
            <person name="Chain P."/>
            <person name="Malfatti S."/>
            <person name="Shin M."/>
            <person name="Vergez L."/>
            <person name="Schmutz J."/>
            <person name="Larimer F."/>
            <person name="Land M."/>
            <person name="Hauser L."/>
            <person name="Richardson P."/>
        </authorList>
    </citation>
    <scope>NUCLEOTIDE SEQUENCE [LARGE SCALE GENOMIC DNA]</scope>
    <source>
        <strain>ATCC 25017 / CCUG 19701 / FSC 153 / O#319-036</strain>
    </source>
</reference>
<dbReference type="EC" id="5.3.1.9" evidence="1"/>
<dbReference type="EMBL" id="CP000937">
    <property type="protein sequence ID" value="ABZ86379.1"/>
    <property type="molecule type" value="Genomic_DNA"/>
</dbReference>
<dbReference type="SMR" id="B0TYL4"/>
<dbReference type="KEGG" id="fph:Fphi_0158"/>
<dbReference type="eggNOG" id="COG0166">
    <property type="taxonomic scope" value="Bacteria"/>
</dbReference>
<dbReference type="HOGENOM" id="CLU_017947_3_1_6"/>
<dbReference type="UniPathway" id="UPA00109">
    <property type="reaction ID" value="UER00181"/>
</dbReference>
<dbReference type="UniPathway" id="UPA00138"/>
<dbReference type="GO" id="GO:0005829">
    <property type="term" value="C:cytosol"/>
    <property type="evidence" value="ECO:0007669"/>
    <property type="project" value="TreeGrafter"/>
</dbReference>
<dbReference type="GO" id="GO:0097367">
    <property type="term" value="F:carbohydrate derivative binding"/>
    <property type="evidence" value="ECO:0007669"/>
    <property type="project" value="InterPro"/>
</dbReference>
<dbReference type="GO" id="GO:0004347">
    <property type="term" value="F:glucose-6-phosphate isomerase activity"/>
    <property type="evidence" value="ECO:0007669"/>
    <property type="project" value="UniProtKB-UniRule"/>
</dbReference>
<dbReference type="GO" id="GO:0048029">
    <property type="term" value="F:monosaccharide binding"/>
    <property type="evidence" value="ECO:0007669"/>
    <property type="project" value="TreeGrafter"/>
</dbReference>
<dbReference type="GO" id="GO:0006094">
    <property type="term" value="P:gluconeogenesis"/>
    <property type="evidence" value="ECO:0007669"/>
    <property type="project" value="UniProtKB-UniRule"/>
</dbReference>
<dbReference type="GO" id="GO:0051156">
    <property type="term" value="P:glucose 6-phosphate metabolic process"/>
    <property type="evidence" value="ECO:0007669"/>
    <property type="project" value="TreeGrafter"/>
</dbReference>
<dbReference type="GO" id="GO:0006096">
    <property type="term" value="P:glycolytic process"/>
    <property type="evidence" value="ECO:0007669"/>
    <property type="project" value="UniProtKB-UniRule"/>
</dbReference>
<dbReference type="CDD" id="cd05015">
    <property type="entry name" value="SIS_PGI_1"/>
    <property type="match status" value="1"/>
</dbReference>
<dbReference type="CDD" id="cd05016">
    <property type="entry name" value="SIS_PGI_2"/>
    <property type="match status" value="1"/>
</dbReference>
<dbReference type="Gene3D" id="1.10.1390.10">
    <property type="match status" value="1"/>
</dbReference>
<dbReference type="Gene3D" id="3.40.50.10490">
    <property type="entry name" value="Glucose-6-phosphate isomerase like protein, domain 1"/>
    <property type="match status" value="2"/>
</dbReference>
<dbReference type="HAMAP" id="MF_00473">
    <property type="entry name" value="G6P_isomerase"/>
    <property type="match status" value="1"/>
</dbReference>
<dbReference type="InterPro" id="IPR001672">
    <property type="entry name" value="G6P_Isomerase"/>
</dbReference>
<dbReference type="InterPro" id="IPR023096">
    <property type="entry name" value="G6P_Isomerase_C"/>
</dbReference>
<dbReference type="InterPro" id="IPR018189">
    <property type="entry name" value="Phosphoglucose_isomerase_CS"/>
</dbReference>
<dbReference type="InterPro" id="IPR046348">
    <property type="entry name" value="SIS_dom_sf"/>
</dbReference>
<dbReference type="InterPro" id="IPR035476">
    <property type="entry name" value="SIS_PGI_1"/>
</dbReference>
<dbReference type="InterPro" id="IPR035482">
    <property type="entry name" value="SIS_PGI_2"/>
</dbReference>
<dbReference type="NCBIfam" id="NF001211">
    <property type="entry name" value="PRK00179.1"/>
    <property type="match status" value="1"/>
</dbReference>
<dbReference type="PANTHER" id="PTHR11469">
    <property type="entry name" value="GLUCOSE-6-PHOSPHATE ISOMERASE"/>
    <property type="match status" value="1"/>
</dbReference>
<dbReference type="PANTHER" id="PTHR11469:SF1">
    <property type="entry name" value="GLUCOSE-6-PHOSPHATE ISOMERASE"/>
    <property type="match status" value="1"/>
</dbReference>
<dbReference type="Pfam" id="PF00342">
    <property type="entry name" value="PGI"/>
    <property type="match status" value="1"/>
</dbReference>
<dbReference type="PRINTS" id="PR00662">
    <property type="entry name" value="G6PISOMERASE"/>
</dbReference>
<dbReference type="SUPFAM" id="SSF53697">
    <property type="entry name" value="SIS domain"/>
    <property type="match status" value="1"/>
</dbReference>
<dbReference type="PROSITE" id="PS00765">
    <property type="entry name" value="P_GLUCOSE_ISOMERASE_1"/>
    <property type="match status" value="1"/>
</dbReference>
<dbReference type="PROSITE" id="PS00174">
    <property type="entry name" value="P_GLUCOSE_ISOMERASE_2"/>
    <property type="match status" value="1"/>
</dbReference>
<dbReference type="PROSITE" id="PS51463">
    <property type="entry name" value="P_GLUCOSE_ISOMERASE_3"/>
    <property type="match status" value="1"/>
</dbReference>
<organism>
    <name type="scientific">Francisella philomiragia subsp. philomiragia (strain ATCC 25017 / CCUG 19701 / FSC 153 / O#319-036)</name>
    <dbReference type="NCBI Taxonomy" id="484022"/>
    <lineage>
        <taxon>Bacteria</taxon>
        <taxon>Pseudomonadati</taxon>
        <taxon>Pseudomonadota</taxon>
        <taxon>Gammaproteobacteria</taxon>
        <taxon>Thiotrichales</taxon>
        <taxon>Francisellaceae</taxon>
        <taxon>Francisella</taxon>
    </lineage>
</organism>
<accession>B0TYL4</accession>
<feature type="chain" id="PRO_1000081239" description="Glucose-6-phosphate isomerase">
    <location>
        <begin position="1"/>
        <end position="540"/>
    </location>
</feature>
<feature type="active site" description="Proton donor" evidence="1">
    <location>
        <position position="346"/>
    </location>
</feature>
<feature type="active site" evidence="1">
    <location>
        <position position="377"/>
    </location>
</feature>
<feature type="active site" evidence="1">
    <location>
        <position position="505"/>
    </location>
</feature>
<sequence>MLFCNDSNKELREQKVSLSHEFATDNHRVEKLSLKFENIYFDYSKNLVNDNILKTLLESASKSNLKNKIQQMFAGEKINSTENRSVLHTALRDLSNSPLVIDGQDIRKEVNEEKQRVKALVEKVTSGDWKGFSGKRITDIVNIGIGGSDLGPKMVVRALQPYHCTGLKVHFVSNVDADSLLQALHVIDPETTLFIVASKSFSTEETLLNSISAREWLLDHYEDEKAVANHFVAISSKLDKVEEFGINLEHCYKMWDWVGGRYSLWSSIGMSIAFAVGYDNFEKLLAGAYSIDKHFKETEFDKNIPVIMGLLASYYSCAYQSQSQALLPYDERLCYFVDYLQQADMESNGKSVNLAGEGVDYQTGVVLWGGVGTNGQHAFHQLLHQGNVFIPVDFIAVATSHHNYDNHQQALLANCFAQSQALMFGQSYDMVYNELLNSGLSEVQAKQLAPHKVIPGNRPSTTILLDELSPYTLGALIALYEHKIFVQGVLWDINSYDQWGVELGKKLGKNILKAMSDDSSAEYQNLDESTKWLIAKVKSK</sequence>
<evidence type="ECO:0000255" key="1">
    <source>
        <dbReference type="HAMAP-Rule" id="MF_00473"/>
    </source>
</evidence>